<accession>P86293</accession>
<keyword id="KW-0009">Actin-binding</keyword>
<keyword id="KW-0963">Cytoplasm</keyword>
<keyword id="KW-0206">Cytoskeleton</keyword>
<dbReference type="EMBL" id="AANS01001005">
    <property type="status" value="NOT_ANNOTATED_CDS"/>
    <property type="molecule type" value="Genomic_DNA"/>
</dbReference>
<dbReference type="SMR" id="P86293"/>
<dbReference type="VEuPathDB" id="PlasmoDB:PfHB3_130067800"/>
<dbReference type="OMA" id="QCRFAVY"/>
<dbReference type="GO" id="GO:0015629">
    <property type="term" value="C:actin cytoskeleton"/>
    <property type="evidence" value="ECO:0000250"/>
    <property type="project" value="UniProtKB"/>
</dbReference>
<dbReference type="GO" id="GO:0005737">
    <property type="term" value="C:cytoplasm"/>
    <property type="evidence" value="ECO:0007669"/>
    <property type="project" value="UniProtKB-SubCell"/>
</dbReference>
<dbReference type="GO" id="GO:0003785">
    <property type="term" value="F:actin monomer binding"/>
    <property type="evidence" value="ECO:0000250"/>
    <property type="project" value="UniProtKB"/>
</dbReference>
<dbReference type="GO" id="GO:0030036">
    <property type="term" value="P:actin cytoskeleton organization"/>
    <property type="evidence" value="ECO:0000250"/>
    <property type="project" value="UniProtKB"/>
</dbReference>
<dbReference type="GO" id="GO:0030042">
    <property type="term" value="P:actin filament depolymerization"/>
    <property type="evidence" value="ECO:0007669"/>
    <property type="project" value="InterPro"/>
</dbReference>
<dbReference type="GO" id="GO:0060327">
    <property type="term" value="P:cytoplasmic actin-based contraction involved in cell motility"/>
    <property type="evidence" value="ECO:0000250"/>
    <property type="project" value="UniProtKB"/>
</dbReference>
<dbReference type="CDD" id="cd11286">
    <property type="entry name" value="ADF_cofilin_like"/>
    <property type="match status" value="1"/>
</dbReference>
<dbReference type="FunFam" id="3.40.20.10:FF:000051">
    <property type="entry name" value="Actin-depolymerizing factor 2"/>
    <property type="match status" value="1"/>
</dbReference>
<dbReference type="Gene3D" id="3.40.20.10">
    <property type="entry name" value="Severin"/>
    <property type="match status" value="1"/>
</dbReference>
<dbReference type="InterPro" id="IPR002108">
    <property type="entry name" value="ADF-H"/>
</dbReference>
<dbReference type="InterPro" id="IPR029006">
    <property type="entry name" value="ADF-H/Gelsolin-like_dom_sf"/>
</dbReference>
<dbReference type="InterPro" id="IPR017904">
    <property type="entry name" value="ADF/Cofilin"/>
</dbReference>
<dbReference type="PANTHER" id="PTHR11913">
    <property type="entry name" value="COFILIN-RELATED"/>
    <property type="match status" value="1"/>
</dbReference>
<dbReference type="Pfam" id="PF00241">
    <property type="entry name" value="Cofilin_ADF"/>
    <property type="match status" value="1"/>
</dbReference>
<dbReference type="SMART" id="SM00102">
    <property type="entry name" value="ADF"/>
    <property type="match status" value="1"/>
</dbReference>
<dbReference type="SUPFAM" id="SSF55753">
    <property type="entry name" value="Actin depolymerizing proteins"/>
    <property type="match status" value="1"/>
</dbReference>
<dbReference type="PROSITE" id="PS51263">
    <property type="entry name" value="ADF_H"/>
    <property type="match status" value="1"/>
</dbReference>
<comment type="function">
    <text evidence="1">Not involved in actin polymerisation, instead functions to stimulate nucleotide exchange on monomeric actin and influence turnover of the small amount of cytosolic actin microfilaments. Essential for erythrocytic schizogony (By similarity).</text>
</comment>
<comment type="subunit">
    <text evidence="1">Interacts with monomeric actin, does not bind to actin polymers.</text>
</comment>
<comment type="subcellular location">
    <subcellularLocation>
        <location evidence="2">Cytoplasm</location>
    </subcellularLocation>
    <subcellularLocation>
        <location evidence="2">Cytoplasm</location>
        <location evidence="2">Cytoskeleton</location>
    </subcellularLocation>
</comment>
<comment type="developmental stage">
    <text evidence="5">Expressed at very low levels throughout the life cycle.</text>
</comment>
<comment type="similarity">
    <text evidence="3">Belongs to the actin-binding proteins ADF family.</text>
</comment>
<sequence length="143" mass="16998">MVSGVKVSDECVYEFNKLKIKHIHKYIIYRIENYEEVIVDFLEQDNSLKSYKDIIIDIRNNLKTTECRYIIADMPIPTPEGVLRNRIYFIFWSPDLAKSKEKMLYASSKEYLVRKINGIFKSLEITCDLEDFEDELRTIILNT</sequence>
<reference evidence="7" key="1">
    <citation type="submission" date="2006-03" db="EMBL/GenBank/DDBJ databases">
        <title>The genome sequence of the Plasmodium falciparum HB3.</title>
        <authorList>
            <consortium name="The Broad Institute Genome Sequencing Platform"/>
            <person name="Birren B."/>
            <person name="Lander E."/>
            <person name="Galagan J."/>
            <person name="Nusbaum C."/>
            <person name="Devon K."/>
            <person name="Henn M."/>
            <person name="Jaffe D."/>
            <person name="Butler J."/>
            <person name="Alvarez P."/>
            <person name="Gnerre S."/>
            <person name="Grabherr M."/>
            <person name="Kleber M."/>
            <person name="Mauceli E."/>
            <person name="Brockman W."/>
            <person name="MacCallum I.A."/>
            <person name="Rounsley S."/>
            <person name="Young S."/>
            <person name="LaButti K."/>
            <person name="Pushparaj V."/>
            <person name="DeCaprio D."/>
            <person name="Crawford M."/>
            <person name="Koehrsen M."/>
            <person name="Engels R."/>
            <person name="Montgomery P."/>
            <person name="Pearson M."/>
            <person name="Howarth C."/>
            <person name="Larson L."/>
            <person name="Luoma S."/>
            <person name="White J."/>
            <person name="Kodira C."/>
            <person name="Zeng Q."/>
            <person name="Oleary S."/>
            <person name="Yandava C."/>
            <person name="Alvarado L."/>
            <person name="Wirth D."/>
            <person name="Volkman S."/>
            <person name="Hartl D."/>
        </authorList>
    </citation>
    <scope>NUCLEOTIDE SEQUENCE [LARGE SCALE GENOMIC DNA]</scope>
</reference>
<reference evidence="7" key="2">
    <citation type="journal article" date="2005" name="Mol. Biol. Cell">
        <title>A Plasmodium actin-depolymerizing factor that binds exclusively to actin monomers.</title>
        <authorList>
            <person name="Schueler H."/>
            <person name="Mueller A.-K."/>
            <person name="Matuschewski K."/>
        </authorList>
    </citation>
    <scope>DEVELOPMENTAL STAGE</scope>
</reference>
<feature type="chain" id="PRO_0000377707" description="Cofilin/actin-depolymerizing factor homolog 2">
    <location>
        <begin position="1"/>
        <end position="143"/>
    </location>
</feature>
<feature type="domain" description="ADF-H" evidence="4">
    <location>
        <begin position="4"/>
        <end position="141"/>
    </location>
</feature>
<name>CADF2_PLAFX</name>
<protein>
    <recommendedName>
        <fullName evidence="6">Cofilin/actin-depolymerizing factor homolog 2</fullName>
        <shortName evidence="6">PfADF2</shortName>
    </recommendedName>
</protein>
<proteinExistence type="evidence at transcript level"/>
<organism>
    <name type="scientific">Plasmodium falciparum (isolate HB3)</name>
    <dbReference type="NCBI Taxonomy" id="137071"/>
    <lineage>
        <taxon>Eukaryota</taxon>
        <taxon>Sar</taxon>
        <taxon>Alveolata</taxon>
        <taxon>Apicomplexa</taxon>
        <taxon>Aconoidasida</taxon>
        <taxon>Haemosporida</taxon>
        <taxon>Plasmodiidae</taxon>
        <taxon>Plasmodium</taxon>
        <taxon>Plasmodium (Laverania)</taxon>
    </lineage>
</organism>
<evidence type="ECO:0000250" key="1">
    <source>
        <dbReference type="UniProtKB" id="P86292"/>
    </source>
</evidence>
<evidence type="ECO:0000250" key="2">
    <source>
        <dbReference type="UniProtKB" id="Q03048"/>
    </source>
</evidence>
<evidence type="ECO:0000255" key="3"/>
<evidence type="ECO:0000255" key="4">
    <source>
        <dbReference type="PROSITE-ProRule" id="PRU00599"/>
    </source>
</evidence>
<evidence type="ECO:0000269" key="5">
    <source>
    </source>
</evidence>
<evidence type="ECO:0000303" key="6">
    <source>
    </source>
</evidence>
<evidence type="ECO:0000305" key="7"/>